<name>VE4_HPV1</name>
<reference key="1">
    <citation type="journal article" date="1982" name="EMBO J.">
        <title>Human papillomavirus 1a complete DNA sequence: a novel type of genome organization among papovaviridae.</title>
        <authorList>
            <person name="Danos O."/>
            <person name="Katinka M."/>
            <person name="Yaniv M."/>
        </authorList>
    </citation>
    <scope>NUCLEOTIDE SEQUENCE [GENOMIC DNA]</scope>
</reference>
<reference key="2">
    <citation type="submission" date="1985-01" db="EMBL/GenBank/DDBJ databases">
        <authorList>
            <person name="Danos O."/>
        </authorList>
    </citation>
    <scope>SEQUENCE REVISION</scope>
</reference>
<reference key="3">
    <citation type="journal article" date="1983" name="J. Virol.">
        <title>Comparative analysis of the human type 1a and bovine type 1 papillomavirus genomes.</title>
        <authorList>
            <person name="Danos O."/>
            <person name="Engel L.W."/>
            <person name="Chen E.Y."/>
            <person name="Yaniv M."/>
            <person name="Howley P.M."/>
        </authorList>
    </citation>
    <scope>COMPARATIVE ANALYSIS OF HUMAN TYPE 1A AND BOVINE TYPE 1 GENOMES</scope>
</reference>
<proteinExistence type="inferred from homology"/>
<protein>
    <recommendedName>
        <fullName>Protein E4</fullName>
    </recommendedName>
</protein>
<accession>P06923</accession>
<evidence type="ECO:0000250" key="1">
    <source>
        <dbReference type="UniProtKB" id="P06922"/>
    </source>
</evidence>
<evidence type="ECO:0000256" key="2">
    <source>
        <dbReference type="SAM" id="MobiDB-lite"/>
    </source>
</evidence>
<evidence type="ECO:0000305" key="3"/>
<sequence length="83" mass="9399">MADNKAPQGLLGLLQYTPTTQPYPRVTPPSNRRPSTTPNSQDRGRPRRSDKDSRKHLYADGLTDGEDPEVPEVEDEEKENQRP</sequence>
<feature type="chain" id="PRO_0000133254" description="Protein E4">
    <location>
        <begin position="1"/>
        <end position="83"/>
    </location>
</feature>
<feature type="region of interest" description="Disordered" evidence="2">
    <location>
        <begin position="1"/>
        <end position="83"/>
    </location>
</feature>
<feature type="compositionally biased region" description="Low complexity" evidence="2">
    <location>
        <begin position="28"/>
        <end position="40"/>
    </location>
</feature>
<feature type="compositionally biased region" description="Basic and acidic residues" evidence="2">
    <location>
        <begin position="42"/>
        <end position="58"/>
    </location>
</feature>
<feature type="compositionally biased region" description="Acidic residues" evidence="2">
    <location>
        <begin position="63"/>
        <end position="83"/>
    </location>
</feature>
<organism>
    <name type="scientific">Human papillomavirus type 1</name>
    <name type="common">Human papillomavirus type 1a</name>
    <dbReference type="NCBI Taxonomy" id="10583"/>
    <lineage>
        <taxon>Viruses</taxon>
        <taxon>Monodnaviria</taxon>
        <taxon>Shotokuvirae</taxon>
        <taxon>Cossaviricota</taxon>
        <taxon>Papovaviricetes</taxon>
        <taxon>Zurhausenvirales</taxon>
        <taxon>Papillomaviridae</taxon>
        <taxon>Firstpapillomavirinae</taxon>
        <taxon>Mupapillomavirus</taxon>
        <taxon>Mupapillomavirus 1</taxon>
    </lineage>
</organism>
<comment type="function">
    <text evidence="1">Contributes to multiple aspects of the viral life cycle including viral genome amplification, suppression of suprabasal cell differentiation and egress of newly formed virions. Induces host cell cycle arrest at the G2 phase by associating with and preventing the nuclear entry of host CDK1/cyclin B1 complexes. Inhibits cellular DNA replication by preventing loading of host replication licensing proteins MCM2 and MCM7 onto chromatin. Within the cytoplasm, associates with host kinase SRPK1, a splicing factor regulator, and inhibits its activity. Therefore, E4 favors expression of late viral transcripts by inhibiting SRPK1-mediated phosphorylation of host serine-arginine (SR) proteins that have critical roles in mRNA metabolism. Late in the infectious cycle, E4 also acts to diminish the integrity of the keratinocyte by disrupting the keratin cytoskeleton and inducing apoptosis through alteration of mitochondrial function to facilitate egress of the newly formed virions.</text>
</comment>
<comment type="subunit">
    <text evidence="1">Assembles into oligomeric complexes. Interacts with host CDK1. Interacts with host SRPK1; this interaction may favor expression of late viral transcripts. Interacts with host cytokeratin components KRT8 and KRT18.</text>
</comment>
<comment type="subcellular location">
    <subcellularLocation>
        <location evidence="1">Host cytoplasm</location>
    </subcellularLocation>
    <subcellularLocation>
        <location evidence="1">Host nucleus</location>
    </subcellularLocation>
</comment>
<comment type="PTM">
    <text evidence="1">Phosphorylated by host ERK. The phosphorylation triggers a structural change that enhances keratin binding and protein stability.</text>
</comment>
<comment type="miscellaneous">
    <text evidence="1">The major E4 form is first synthesized as an E1^E4 fusion protein from spliced E1^E4 transcripts, such that the first few amino acids of the E4 protein are derived from the N terminus of E1.</text>
</comment>
<comment type="similarity">
    <text evidence="3">Belongs to the papillomaviridae E4 protein family.</text>
</comment>
<keyword id="KW-0244">Early protein</keyword>
<keyword id="KW-1035">Host cytoplasm</keyword>
<keyword id="KW-1079">Host G2/M cell cycle arrest by virus</keyword>
<keyword id="KW-1048">Host nucleus</keyword>
<keyword id="KW-0945">Host-virus interaction</keyword>
<keyword id="KW-1121">Modulation of host cell cycle by virus</keyword>
<keyword id="KW-0597">Phosphoprotein</keyword>
<keyword id="KW-1185">Reference proteome</keyword>
<dbReference type="EMBL" id="V01116">
    <property type="status" value="NOT_ANNOTATED_CDS"/>
    <property type="molecule type" value="Genomic_DNA"/>
</dbReference>
<dbReference type="SMR" id="P06923"/>
<dbReference type="Proteomes" id="UP000006372">
    <property type="component" value="Segment"/>
</dbReference>
<dbReference type="GO" id="GO:0030430">
    <property type="term" value="C:host cell cytoplasm"/>
    <property type="evidence" value="ECO:0007669"/>
    <property type="project" value="UniProtKB-SubCell"/>
</dbReference>
<dbReference type="GO" id="GO:0042025">
    <property type="term" value="C:host cell nucleus"/>
    <property type="evidence" value="ECO:0007669"/>
    <property type="project" value="UniProtKB-SubCell"/>
</dbReference>
<dbReference type="GO" id="GO:0039592">
    <property type="term" value="P:symbiont-mediated arrest of host cell cycle during G2/M transition"/>
    <property type="evidence" value="ECO:0007669"/>
    <property type="project" value="UniProtKB-KW"/>
</dbReference>
<organismHost>
    <name type="scientific">Homo sapiens</name>
    <name type="common">Human</name>
    <dbReference type="NCBI Taxonomy" id="9606"/>
</organismHost>
<gene>
    <name type="primary">E4</name>
</gene>